<feature type="chain" id="PRO_0000300809" description="RING finger protein 207">
    <location>
        <begin position="1"/>
        <end position="634"/>
    </location>
</feature>
<feature type="zinc finger region" description="RING-type" evidence="3">
    <location>
        <begin position="25"/>
        <end position="64"/>
    </location>
</feature>
<feature type="zinc finger region" description="B box-type; atypical" evidence="2">
    <location>
        <begin position="93"/>
        <end position="145"/>
    </location>
</feature>
<feature type="region of interest" description="Disordered" evidence="4">
    <location>
        <begin position="552"/>
        <end position="634"/>
    </location>
</feature>
<feature type="coiled-coil region" evidence="1">
    <location>
        <begin position="422"/>
        <end position="457"/>
    </location>
</feature>
<feature type="coiled-coil region" evidence="1">
    <location>
        <begin position="494"/>
        <end position="518"/>
    </location>
</feature>
<feature type="binding site" evidence="2">
    <location>
        <position position="98"/>
    </location>
    <ligand>
        <name>Zn(2+)</name>
        <dbReference type="ChEBI" id="CHEBI:29105"/>
    </ligand>
</feature>
<feature type="binding site" evidence="2">
    <location>
        <position position="101"/>
    </location>
    <ligand>
        <name>Zn(2+)</name>
        <dbReference type="ChEBI" id="CHEBI:29105"/>
    </ligand>
</feature>
<feature type="binding site" evidence="2">
    <location>
        <position position="127"/>
    </location>
    <ligand>
        <name>Zn(2+)</name>
        <dbReference type="ChEBI" id="CHEBI:29105"/>
    </ligand>
</feature>
<feature type="binding site" evidence="2">
    <location>
        <position position="132"/>
    </location>
    <ligand>
        <name>Zn(2+)</name>
        <dbReference type="ChEBI" id="CHEBI:29105"/>
    </ligand>
</feature>
<feature type="splice variant" id="VSP_028439" description="In isoform 3 and isoform 4." evidence="7 8">
    <location>
        <begin position="1"/>
        <end position="227"/>
    </location>
</feature>
<feature type="splice variant" id="VSP_027863" description="In isoform 2." evidence="7 8">
    <original>DVETTYFCNTCGQPLCARCRDETHRARMFARHDIVALGQRSRDVPQKCTLHAEPYLLFSTDKKLLLCIRCFRDMQKESRAHCVDLESAYVQGCERLEQAVLAVKALQTATREAIALLQAMVEEVRHSAAEEEDAIH</original>
    <variation>AGAAGRVGEEQRVPGCTVPNACTCTQHVFRGRPGSGFSSTSLGHLGPKCEPHYTGGETEVQNKGLEPVSRQWQRLRPFDLGRAHWSPIQGGVVDLHRRGSPVCRPGPTLKGLCYPSGIEAATAQGRWGQHAVPSGL</variation>
    <location>
        <begin position="109"/>
        <end position="244"/>
    </location>
</feature>
<feature type="splice variant" id="VSP_027864" description="In isoform 2." evidence="7 8">
    <location>
        <begin position="245"/>
        <end position="634"/>
    </location>
</feature>
<feature type="splice variant" id="VSP_028440" description="In isoform 3." evidence="7">
    <original>ELMERLQGIVTRPHHLRPIQSSKIASDHRAEFARCLEPLLLLGPRRVAAAASGANTL</original>
    <variation>AGRGLRPQGADGAPLPLPSRKDVGVTRPKAHAAPVHQHQGAAGGGREHALRRALPPL</variation>
    <location>
        <begin position="315"/>
        <end position="371"/>
    </location>
</feature>
<feature type="splice variant" id="VSP_028441" description="In isoform 3." evidence="7">
    <location>
        <begin position="372"/>
        <end position="634"/>
    </location>
</feature>
<feature type="splice variant" id="VSP_028442" description="In isoform 4." evidence="7 8">
    <original>AQLHDLLQ</original>
    <variation>GSRQLAAE</variation>
    <location>
        <begin position="512"/>
        <end position="519"/>
    </location>
</feature>
<feature type="splice variant" id="VSP_028443" description="In isoform 4." evidence="7 8">
    <location>
        <begin position="520"/>
        <end position="634"/>
    </location>
</feature>
<feature type="sequence variant" id="VAR_052112" description="In dbSNP:rs12073329.">
    <original>A</original>
    <variation>T</variation>
    <location>
        <position position="421"/>
    </location>
</feature>
<feature type="sequence variant" id="VAR_061818" description="In dbSNP:rs55823245.">
    <original>R</original>
    <variation>C</variation>
    <location>
        <position position="539"/>
    </location>
</feature>
<feature type="sequence variant" id="VAR_052113" description="In dbSNP:rs709209." evidence="5">
    <original>N</original>
    <variation>S</variation>
    <location>
        <position position="573"/>
    </location>
</feature>
<feature type="sequence variant" id="VAR_052114" description="Associated with prolonged QT interval in heart's electrical cycle; behaves like wild-type in terms of protein expression, subcellular location and shortening of heart's action potential duration, when expressed in neonatal rabbit cardiomyocytes; dbSNP:rs846111." evidence="5 6">
    <original>G</original>
    <variation>A</variation>
    <location>
        <position position="603"/>
    </location>
</feature>
<feature type="mutagenesis site" description="Loss of KCNH2 up-regulation." evidence="6">
    <original>C</original>
    <variation>R</variation>
    <location>
        <position position="25"/>
    </location>
</feature>
<feature type="sequence conflict" description="In Ref. 1; BAB71243." evidence="9" ref="1">
    <original>F</original>
    <variation>L</variation>
    <location>
        <position position="309"/>
    </location>
</feature>
<reference key="1">
    <citation type="journal article" date="2004" name="Nat. Genet.">
        <title>Complete sequencing and characterization of 21,243 full-length human cDNAs.</title>
        <authorList>
            <person name="Ota T."/>
            <person name="Suzuki Y."/>
            <person name="Nishikawa T."/>
            <person name="Otsuki T."/>
            <person name="Sugiyama T."/>
            <person name="Irie R."/>
            <person name="Wakamatsu A."/>
            <person name="Hayashi K."/>
            <person name="Sato H."/>
            <person name="Nagai K."/>
            <person name="Kimura K."/>
            <person name="Makita H."/>
            <person name="Sekine M."/>
            <person name="Obayashi M."/>
            <person name="Nishi T."/>
            <person name="Shibahara T."/>
            <person name="Tanaka T."/>
            <person name="Ishii S."/>
            <person name="Yamamoto J."/>
            <person name="Saito K."/>
            <person name="Kawai Y."/>
            <person name="Isono Y."/>
            <person name="Nakamura Y."/>
            <person name="Nagahari K."/>
            <person name="Murakami K."/>
            <person name="Yasuda T."/>
            <person name="Iwayanagi T."/>
            <person name="Wagatsuma M."/>
            <person name="Shiratori A."/>
            <person name="Sudo H."/>
            <person name="Hosoiri T."/>
            <person name="Kaku Y."/>
            <person name="Kodaira H."/>
            <person name="Kondo H."/>
            <person name="Sugawara M."/>
            <person name="Takahashi M."/>
            <person name="Kanda K."/>
            <person name="Yokoi T."/>
            <person name="Furuya T."/>
            <person name="Kikkawa E."/>
            <person name="Omura Y."/>
            <person name="Abe K."/>
            <person name="Kamihara K."/>
            <person name="Katsuta N."/>
            <person name="Sato K."/>
            <person name="Tanikawa M."/>
            <person name="Yamazaki M."/>
            <person name="Ninomiya K."/>
            <person name="Ishibashi T."/>
            <person name="Yamashita H."/>
            <person name="Murakawa K."/>
            <person name="Fujimori K."/>
            <person name="Tanai H."/>
            <person name="Kimata M."/>
            <person name="Watanabe M."/>
            <person name="Hiraoka S."/>
            <person name="Chiba Y."/>
            <person name="Ishida S."/>
            <person name="Ono Y."/>
            <person name="Takiguchi S."/>
            <person name="Watanabe S."/>
            <person name="Yosida M."/>
            <person name="Hotuta T."/>
            <person name="Kusano J."/>
            <person name="Kanehori K."/>
            <person name="Takahashi-Fujii A."/>
            <person name="Hara H."/>
            <person name="Tanase T.-O."/>
            <person name="Nomura Y."/>
            <person name="Togiya S."/>
            <person name="Komai F."/>
            <person name="Hara R."/>
            <person name="Takeuchi K."/>
            <person name="Arita M."/>
            <person name="Imose N."/>
            <person name="Musashino K."/>
            <person name="Yuuki H."/>
            <person name="Oshima A."/>
            <person name="Sasaki N."/>
            <person name="Aotsuka S."/>
            <person name="Yoshikawa Y."/>
            <person name="Matsunawa H."/>
            <person name="Ichihara T."/>
            <person name="Shiohata N."/>
            <person name="Sano S."/>
            <person name="Moriya S."/>
            <person name="Momiyama H."/>
            <person name="Satoh N."/>
            <person name="Takami S."/>
            <person name="Terashima Y."/>
            <person name="Suzuki O."/>
            <person name="Nakagawa S."/>
            <person name="Senoh A."/>
            <person name="Mizoguchi H."/>
            <person name="Goto Y."/>
            <person name="Shimizu F."/>
            <person name="Wakebe H."/>
            <person name="Hishigaki H."/>
            <person name="Watanabe T."/>
            <person name="Sugiyama A."/>
            <person name="Takemoto M."/>
            <person name="Kawakami B."/>
            <person name="Yamazaki M."/>
            <person name="Watanabe K."/>
            <person name="Kumagai A."/>
            <person name="Itakura S."/>
            <person name="Fukuzumi Y."/>
            <person name="Fujimori Y."/>
            <person name="Komiyama M."/>
            <person name="Tashiro H."/>
            <person name="Tanigami A."/>
            <person name="Fujiwara T."/>
            <person name="Ono T."/>
            <person name="Yamada K."/>
            <person name="Fujii Y."/>
            <person name="Ozaki K."/>
            <person name="Hirao M."/>
            <person name="Ohmori Y."/>
            <person name="Kawabata A."/>
            <person name="Hikiji T."/>
            <person name="Kobatake N."/>
            <person name="Inagaki H."/>
            <person name="Ikema Y."/>
            <person name="Okamoto S."/>
            <person name="Okitani R."/>
            <person name="Kawakami T."/>
            <person name="Noguchi S."/>
            <person name="Itoh T."/>
            <person name="Shigeta K."/>
            <person name="Senba T."/>
            <person name="Matsumura K."/>
            <person name="Nakajima Y."/>
            <person name="Mizuno T."/>
            <person name="Morinaga M."/>
            <person name="Sasaki M."/>
            <person name="Togashi T."/>
            <person name="Oyama M."/>
            <person name="Hata H."/>
            <person name="Watanabe M."/>
            <person name="Komatsu T."/>
            <person name="Mizushima-Sugano J."/>
            <person name="Satoh T."/>
            <person name="Shirai Y."/>
            <person name="Takahashi Y."/>
            <person name="Nakagawa K."/>
            <person name="Okumura K."/>
            <person name="Nagase T."/>
            <person name="Nomura N."/>
            <person name="Kikuchi H."/>
            <person name="Masuho Y."/>
            <person name="Yamashita R."/>
            <person name="Nakai K."/>
            <person name="Yada T."/>
            <person name="Nakamura Y."/>
            <person name="Ohara O."/>
            <person name="Isogai T."/>
            <person name="Sugano S."/>
        </authorList>
    </citation>
    <scope>NUCLEOTIDE SEQUENCE [LARGE SCALE MRNA] (ISOFORMS 2; 3 AND 4)</scope>
    <scope>NUCLEOTIDE SEQUENCE [LARGE SCALE MRNA] OF 392-634 (ISOFORM 1)</scope>
    <source>
        <tissue>Amygdala</tissue>
        <tissue>Brain</tissue>
        <tissue>Teratocarcinoma</tissue>
        <tissue>Thymus</tissue>
    </source>
</reference>
<reference key="2">
    <citation type="journal article" date="2006" name="Nature">
        <title>The DNA sequence and biological annotation of human chromosome 1.</title>
        <authorList>
            <person name="Gregory S.G."/>
            <person name="Barlow K.F."/>
            <person name="McLay K.E."/>
            <person name="Kaul R."/>
            <person name="Swarbreck D."/>
            <person name="Dunham A."/>
            <person name="Scott C.E."/>
            <person name="Howe K.L."/>
            <person name="Woodfine K."/>
            <person name="Spencer C.C.A."/>
            <person name="Jones M.C."/>
            <person name="Gillson C."/>
            <person name="Searle S."/>
            <person name="Zhou Y."/>
            <person name="Kokocinski F."/>
            <person name="McDonald L."/>
            <person name="Evans R."/>
            <person name="Phillips K."/>
            <person name="Atkinson A."/>
            <person name="Cooper R."/>
            <person name="Jones C."/>
            <person name="Hall R.E."/>
            <person name="Andrews T.D."/>
            <person name="Lloyd C."/>
            <person name="Ainscough R."/>
            <person name="Almeida J.P."/>
            <person name="Ambrose K.D."/>
            <person name="Anderson F."/>
            <person name="Andrew R.W."/>
            <person name="Ashwell R.I.S."/>
            <person name="Aubin K."/>
            <person name="Babbage A.K."/>
            <person name="Bagguley C.L."/>
            <person name="Bailey J."/>
            <person name="Beasley H."/>
            <person name="Bethel G."/>
            <person name="Bird C.P."/>
            <person name="Bray-Allen S."/>
            <person name="Brown J.Y."/>
            <person name="Brown A.J."/>
            <person name="Buckley D."/>
            <person name="Burton J."/>
            <person name="Bye J."/>
            <person name="Carder C."/>
            <person name="Chapman J.C."/>
            <person name="Clark S.Y."/>
            <person name="Clarke G."/>
            <person name="Clee C."/>
            <person name="Cobley V."/>
            <person name="Collier R.E."/>
            <person name="Corby N."/>
            <person name="Coville G.J."/>
            <person name="Davies J."/>
            <person name="Deadman R."/>
            <person name="Dunn M."/>
            <person name="Earthrowl M."/>
            <person name="Ellington A.G."/>
            <person name="Errington H."/>
            <person name="Frankish A."/>
            <person name="Frankland J."/>
            <person name="French L."/>
            <person name="Garner P."/>
            <person name="Garnett J."/>
            <person name="Gay L."/>
            <person name="Ghori M.R.J."/>
            <person name="Gibson R."/>
            <person name="Gilby L.M."/>
            <person name="Gillett W."/>
            <person name="Glithero R.J."/>
            <person name="Grafham D.V."/>
            <person name="Griffiths C."/>
            <person name="Griffiths-Jones S."/>
            <person name="Grocock R."/>
            <person name="Hammond S."/>
            <person name="Harrison E.S.I."/>
            <person name="Hart E."/>
            <person name="Haugen E."/>
            <person name="Heath P.D."/>
            <person name="Holmes S."/>
            <person name="Holt K."/>
            <person name="Howden P.J."/>
            <person name="Hunt A.R."/>
            <person name="Hunt S.E."/>
            <person name="Hunter G."/>
            <person name="Isherwood J."/>
            <person name="James R."/>
            <person name="Johnson C."/>
            <person name="Johnson D."/>
            <person name="Joy A."/>
            <person name="Kay M."/>
            <person name="Kershaw J.K."/>
            <person name="Kibukawa M."/>
            <person name="Kimberley A.M."/>
            <person name="King A."/>
            <person name="Knights A.J."/>
            <person name="Lad H."/>
            <person name="Laird G."/>
            <person name="Lawlor S."/>
            <person name="Leongamornlert D.A."/>
            <person name="Lloyd D.M."/>
            <person name="Loveland J."/>
            <person name="Lovell J."/>
            <person name="Lush M.J."/>
            <person name="Lyne R."/>
            <person name="Martin S."/>
            <person name="Mashreghi-Mohammadi M."/>
            <person name="Matthews L."/>
            <person name="Matthews N.S.W."/>
            <person name="McLaren S."/>
            <person name="Milne S."/>
            <person name="Mistry S."/>
            <person name="Moore M.J.F."/>
            <person name="Nickerson T."/>
            <person name="O'Dell C.N."/>
            <person name="Oliver K."/>
            <person name="Palmeiri A."/>
            <person name="Palmer S.A."/>
            <person name="Parker A."/>
            <person name="Patel D."/>
            <person name="Pearce A.V."/>
            <person name="Peck A.I."/>
            <person name="Pelan S."/>
            <person name="Phelps K."/>
            <person name="Phillimore B.J."/>
            <person name="Plumb R."/>
            <person name="Rajan J."/>
            <person name="Raymond C."/>
            <person name="Rouse G."/>
            <person name="Saenphimmachak C."/>
            <person name="Sehra H.K."/>
            <person name="Sheridan E."/>
            <person name="Shownkeen R."/>
            <person name="Sims S."/>
            <person name="Skuce C.D."/>
            <person name="Smith M."/>
            <person name="Steward C."/>
            <person name="Subramanian S."/>
            <person name="Sycamore N."/>
            <person name="Tracey A."/>
            <person name="Tromans A."/>
            <person name="Van Helmond Z."/>
            <person name="Wall M."/>
            <person name="Wallis J.M."/>
            <person name="White S."/>
            <person name="Whitehead S.L."/>
            <person name="Wilkinson J.E."/>
            <person name="Willey D.L."/>
            <person name="Williams H."/>
            <person name="Wilming L."/>
            <person name="Wray P.W."/>
            <person name="Wu Z."/>
            <person name="Coulson A."/>
            <person name="Vaudin M."/>
            <person name="Sulston J.E."/>
            <person name="Durbin R.M."/>
            <person name="Hubbard T."/>
            <person name="Wooster R."/>
            <person name="Dunham I."/>
            <person name="Carter N.P."/>
            <person name="McVean G."/>
            <person name="Ross M.T."/>
            <person name="Harrow J."/>
            <person name="Olson M.V."/>
            <person name="Beck S."/>
            <person name="Rogers J."/>
            <person name="Bentley D.R."/>
        </authorList>
    </citation>
    <scope>NUCLEOTIDE SEQUENCE [LARGE SCALE GENOMIC DNA]</scope>
</reference>
<reference key="3">
    <citation type="journal article" date="2004" name="Genome Res.">
        <title>The status, quality, and expansion of the NIH full-length cDNA project: the Mammalian Gene Collection (MGC).</title>
        <authorList>
            <consortium name="The MGC Project Team"/>
        </authorList>
    </citation>
    <scope>NUCLEOTIDE SEQUENCE [LARGE SCALE MRNA] (ISOFORMS 2 AND 4)</scope>
</reference>
<reference key="4">
    <citation type="journal article" date="2009" name="Nat. Genet.">
        <title>Common variants at ten loci influence QT interval duration in the QTGEN Study.</title>
        <authorList>
            <person name="Newton-Cheh C."/>
            <person name="Eijgelsheim M."/>
            <person name="Rice K.M."/>
            <person name="de Bakker P.I."/>
            <person name="Yin X."/>
            <person name="Estrada K."/>
            <person name="Bis J.C."/>
            <person name="Marciante K."/>
            <person name="Rivadeneira F."/>
            <person name="Noseworthy P.A."/>
            <person name="Sotoodehnia N."/>
            <person name="Smith N.L."/>
            <person name="Rotter J.I."/>
            <person name="Kors J.A."/>
            <person name="Witteman J.C."/>
            <person name="Hofman A."/>
            <person name="Heckbert S.R."/>
            <person name="O'Donnell C.J."/>
            <person name="Uitterlinden A.G."/>
            <person name="Psaty B.M."/>
            <person name="Lumley T."/>
            <person name="Larson M.G."/>
            <person name="Stricker B.H."/>
        </authorList>
    </citation>
    <scope>ASSOCIATION WITH QT INTERVAL VARIANCE</scope>
</reference>
<reference key="5">
    <citation type="journal article" date="2009" name="Nat. Genet.">
        <title>Common variants at ten loci modulate the QT interval duration in the QTSCD Study.</title>
        <authorList>
            <person name="Pfeufer A."/>
            <person name="Sanna S."/>
            <person name="Arking D.E."/>
            <person name="Muller M."/>
            <person name="Gateva V."/>
            <person name="Fuchsberger C."/>
            <person name="Ehret G.B."/>
            <person name="Orru M."/>
            <person name="Pattaro C."/>
            <person name="Kottgen A."/>
            <person name="Perz S."/>
            <person name="Usala G."/>
            <person name="Barbalic M."/>
            <person name="Li M."/>
            <person name="Putz B."/>
            <person name="Scuteri A."/>
            <person name="Prineas R.J."/>
            <person name="Sinner M.F."/>
            <person name="Gieger C."/>
            <person name="Najjar S.S."/>
            <person name="Kao W.H."/>
            <person name="Muhleisen T.W."/>
            <person name="Dei M."/>
            <person name="Happle C."/>
            <person name="Mohlenkamp S."/>
            <person name="Crisponi L."/>
            <person name="Erbel R."/>
            <person name="Jockel K.H."/>
            <person name="Naitza S."/>
            <person name="Steinbeck G."/>
            <person name="Marroni F."/>
            <person name="Hicks A.A."/>
            <person name="Lakatta E."/>
            <person name="Muller-Myhsok B."/>
            <person name="Pramstaller P.P."/>
            <person name="Wichmann H.E."/>
            <person name="Schlessinger D."/>
            <person name="Boerwinkle E."/>
            <person name="Meitinger T."/>
            <person name="Uda M."/>
            <person name="Coresh J."/>
            <person name="Kaab S."/>
            <person name="Abecasis G.R."/>
            <person name="Chakravarti A."/>
        </authorList>
    </citation>
    <scope>ASSOCIATION WITH QT INTERVAL VARIANCE</scope>
    <scope>VARIANTS SER-573 AND ALA-603</scope>
</reference>
<reference key="6">
    <citation type="journal article" date="2014" name="J. Biol. Chem.">
        <title>RING finger protein RNF207, a novel regulator of cardiac excitation.</title>
        <authorList>
            <person name="Roder K."/>
            <person name="Werdich A.A."/>
            <person name="Li W."/>
            <person name="Liu M."/>
            <person name="Kim T.Y."/>
            <person name="Organ-Darling L.E."/>
            <person name="Moshal K.S."/>
            <person name="Hwang J.M."/>
            <person name="Lu Y."/>
            <person name="Choi B.R."/>
            <person name="MacRae C.A."/>
            <person name="Koren G."/>
        </authorList>
    </citation>
    <scope>FUNCTION</scope>
    <scope>SUBCELLULAR LOCATION</scope>
    <scope>CHARACTERIZATION OF VARIANT ALA-603</scope>
    <scope>INTERACTION WITH DNAJA1; HSPA1A; HSPA8 AND KCNH2</scope>
    <scope>AUTOUBIQUITINATION</scope>
    <scope>MUTAGENESIS OF CYS-25</scope>
</reference>
<comment type="function">
    <text evidence="6">Plays a role in cardiac repolarization possibly by stabilizing membrane expression of the potassium channel KCNH2/HERG, or by assisting its synthesis, folding or export from the endoplasmic reticulum, in a heat shock protein-dependent manner.</text>
</comment>
<comment type="subunit">
    <text evidence="6">Interacts with the core-glycosylated, but not the fully glycosylated form of KCNH2/HERG. Interacts with DNAJA1 and HSPA8. Interacts (via the C-terminus) with HSPA1A; this interaction additively increases KCNH2 expression.</text>
</comment>
<comment type="subcellular location">
    <subcellularLocation>
        <location evidence="6">Cytoplasm</location>
    </subcellularLocation>
    <text evidence="6">Probably located in the endoplasmic reticulum and/or possibly the cis-Golgi apparatus.</text>
</comment>
<comment type="alternative products">
    <event type="alternative splicing"/>
    <isoform>
        <id>Q6ZRF8-1</id>
        <name>1</name>
        <sequence type="displayed"/>
    </isoform>
    <isoform>
        <id>Q6ZRF8-2</id>
        <name>2</name>
        <sequence type="described" ref="VSP_027863 VSP_027864"/>
    </isoform>
    <isoform>
        <id>Q6ZRF8-3</id>
        <name>3</name>
        <sequence type="described" ref="VSP_028439 VSP_028440 VSP_028441"/>
    </isoform>
    <isoform>
        <id>Q6ZRF8-4</id>
        <name>4</name>
        <sequence type="described" ref="VSP_028439 VSP_028442 VSP_028443"/>
    </isoform>
</comment>
<comment type="polymorphism">
    <text>Genetic variation in RNF207 may influence the duration of QT interval, a mesure of cardiac repolarization that depends on multiple environmental and genetic contributors. Prolonged or shortened QT intervals predisposes to ventricular arrhythmias and are a risk factor for sudden cardiac death.</text>
</comment>
<comment type="sequence caution" evidence="9">
    <conflict type="erroneous initiation">
        <sequence resource="EMBL-CDS" id="AAI28238"/>
    </conflict>
</comment>
<evidence type="ECO:0000255" key="1"/>
<evidence type="ECO:0000255" key="2">
    <source>
        <dbReference type="PROSITE-ProRule" id="PRU00024"/>
    </source>
</evidence>
<evidence type="ECO:0000255" key="3">
    <source>
        <dbReference type="PROSITE-ProRule" id="PRU00175"/>
    </source>
</evidence>
<evidence type="ECO:0000256" key="4">
    <source>
        <dbReference type="SAM" id="MobiDB-lite"/>
    </source>
</evidence>
<evidence type="ECO:0000269" key="5">
    <source>
    </source>
</evidence>
<evidence type="ECO:0000269" key="6">
    <source>
    </source>
</evidence>
<evidence type="ECO:0000303" key="7">
    <source>
    </source>
</evidence>
<evidence type="ECO:0000303" key="8">
    <source>
    </source>
</evidence>
<evidence type="ECO:0000305" key="9"/>
<name>RN207_HUMAN</name>
<dbReference type="EMBL" id="AK056658">
    <property type="protein sequence ID" value="BAB71243.1"/>
    <property type="molecule type" value="mRNA"/>
</dbReference>
<dbReference type="EMBL" id="AK127700">
    <property type="protein sequence ID" value="BAC87091.1"/>
    <property type="molecule type" value="mRNA"/>
</dbReference>
<dbReference type="EMBL" id="AK128246">
    <property type="protein sequence ID" value="BAC87352.1"/>
    <property type="molecule type" value="mRNA"/>
</dbReference>
<dbReference type="EMBL" id="AK294223">
    <property type="protein sequence ID" value="BAG57527.1"/>
    <property type="molecule type" value="mRNA"/>
</dbReference>
<dbReference type="EMBL" id="AL031847">
    <property type="status" value="NOT_ANNOTATED_CDS"/>
    <property type="molecule type" value="Genomic_DNA"/>
</dbReference>
<dbReference type="EMBL" id="BC119780">
    <property type="protein sequence ID" value="AAI19781.1"/>
    <property type="molecule type" value="mRNA"/>
</dbReference>
<dbReference type="EMBL" id="BC128237">
    <property type="protein sequence ID" value="AAI28238.1"/>
    <property type="status" value="ALT_INIT"/>
    <property type="molecule type" value="mRNA"/>
</dbReference>
<dbReference type="CCDS" id="CCDS59.2">
    <molecule id="Q6ZRF8-1"/>
</dbReference>
<dbReference type="RefSeq" id="NP_997279.2">
    <molecule id="Q6ZRF8-1"/>
    <property type="nucleotide sequence ID" value="NM_207396.3"/>
</dbReference>
<dbReference type="SMR" id="Q6ZRF8"/>
<dbReference type="BioGRID" id="132764">
    <property type="interactions" value="384"/>
</dbReference>
<dbReference type="FunCoup" id="Q6ZRF8">
    <property type="interactions" value="275"/>
</dbReference>
<dbReference type="STRING" id="9606.ENSP00000367173"/>
<dbReference type="GlyGen" id="Q6ZRF8">
    <property type="glycosylation" value="1 site, 1 O-linked glycan (1 site)"/>
</dbReference>
<dbReference type="iPTMnet" id="Q6ZRF8"/>
<dbReference type="PhosphoSitePlus" id="Q6ZRF8"/>
<dbReference type="BioMuta" id="RNF207"/>
<dbReference type="DMDM" id="158563957"/>
<dbReference type="jPOST" id="Q6ZRF8"/>
<dbReference type="MassIVE" id="Q6ZRF8"/>
<dbReference type="PaxDb" id="9606-ENSP00000367173"/>
<dbReference type="PeptideAtlas" id="Q6ZRF8"/>
<dbReference type="ProteomicsDB" id="68123">
    <molecule id="Q6ZRF8-1"/>
</dbReference>
<dbReference type="ProteomicsDB" id="68126">
    <molecule id="Q6ZRF8-4"/>
</dbReference>
<dbReference type="Antibodypedia" id="27241">
    <property type="antibodies" value="111 antibodies from 17 providers"/>
</dbReference>
<dbReference type="DNASU" id="388591"/>
<dbReference type="Ensembl" id="ENST00000377939.5">
    <molecule id="Q6ZRF8-1"/>
    <property type="protein sequence ID" value="ENSP00000367173.4"/>
    <property type="gene ID" value="ENSG00000158286.13"/>
</dbReference>
<dbReference type="GeneID" id="388591"/>
<dbReference type="KEGG" id="hsa:388591"/>
<dbReference type="MANE-Select" id="ENST00000377939.5">
    <property type="protein sequence ID" value="ENSP00000367173.4"/>
    <property type="RefSeq nucleotide sequence ID" value="NM_207396.3"/>
    <property type="RefSeq protein sequence ID" value="NP_997279.2"/>
</dbReference>
<dbReference type="UCSC" id="uc001amg.4">
    <molecule id="Q6ZRF8-1"/>
    <property type="organism name" value="human"/>
</dbReference>
<dbReference type="AGR" id="HGNC:32947"/>
<dbReference type="CTD" id="388591"/>
<dbReference type="DisGeNET" id="388591"/>
<dbReference type="GeneCards" id="RNF207"/>
<dbReference type="HGNC" id="HGNC:32947">
    <property type="gene designation" value="RNF207"/>
</dbReference>
<dbReference type="HPA" id="ENSG00000158286">
    <property type="expression patterns" value="Tissue enhanced (heart)"/>
</dbReference>
<dbReference type="MalaCards" id="RNF207"/>
<dbReference type="MIM" id="616923">
    <property type="type" value="gene"/>
</dbReference>
<dbReference type="neXtProt" id="NX_Q6ZRF8"/>
<dbReference type="OpenTargets" id="ENSG00000158286"/>
<dbReference type="PharmGKB" id="PA145148144"/>
<dbReference type="VEuPathDB" id="HostDB:ENSG00000158286"/>
<dbReference type="eggNOG" id="KOG4367">
    <property type="taxonomic scope" value="Eukaryota"/>
</dbReference>
<dbReference type="GeneTree" id="ENSGT00510000048612"/>
<dbReference type="HOGENOM" id="CLU_034912_0_0_1"/>
<dbReference type="InParanoid" id="Q6ZRF8"/>
<dbReference type="OMA" id="YEDSYRH"/>
<dbReference type="OrthoDB" id="9049620at2759"/>
<dbReference type="PAN-GO" id="Q6ZRF8">
    <property type="GO annotations" value="8 GO annotations based on evolutionary models"/>
</dbReference>
<dbReference type="PhylomeDB" id="Q6ZRF8"/>
<dbReference type="TreeFam" id="TF318184"/>
<dbReference type="PathwayCommons" id="Q6ZRF8"/>
<dbReference type="SIGNOR" id="Q6ZRF8"/>
<dbReference type="BioGRID-ORCS" id="388591">
    <property type="hits" value="16 hits in 1191 CRISPR screens"/>
</dbReference>
<dbReference type="ChiTaRS" id="RNF207">
    <property type="organism name" value="human"/>
</dbReference>
<dbReference type="GenomeRNAi" id="388591"/>
<dbReference type="Pharos" id="Q6ZRF8">
    <property type="development level" value="Tbio"/>
</dbReference>
<dbReference type="PRO" id="PR:Q6ZRF8"/>
<dbReference type="Proteomes" id="UP000005640">
    <property type="component" value="Chromosome 1"/>
</dbReference>
<dbReference type="RNAct" id="Q6ZRF8">
    <property type="molecule type" value="protein"/>
</dbReference>
<dbReference type="Bgee" id="ENSG00000158286">
    <property type="expression patterns" value="Expressed in apex of heart and 131 other cell types or tissues"/>
</dbReference>
<dbReference type="GO" id="GO:0048471">
    <property type="term" value="C:perinuclear region of cytoplasm"/>
    <property type="evidence" value="ECO:0000315"/>
    <property type="project" value="BHF-UCL"/>
</dbReference>
<dbReference type="GO" id="GO:0030544">
    <property type="term" value="F:Hsp70 protein binding"/>
    <property type="evidence" value="ECO:0000353"/>
    <property type="project" value="BHF-UCL"/>
</dbReference>
<dbReference type="GO" id="GO:0051087">
    <property type="term" value="F:protein-folding chaperone binding"/>
    <property type="evidence" value="ECO:0000353"/>
    <property type="project" value="BHF-UCL"/>
</dbReference>
<dbReference type="GO" id="GO:0044325">
    <property type="term" value="F:transmembrane transporter binding"/>
    <property type="evidence" value="ECO:0000353"/>
    <property type="project" value="BHF-UCL"/>
</dbReference>
<dbReference type="GO" id="GO:0008270">
    <property type="term" value="F:zinc ion binding"/>
    <property type="evidence" value="ECO:0007669"/>
    <property type="project" value="UniProtKB-KW"/>
</dbReference>
<dbReference type="GO" id="GO:0010628">
    <property type="term" value="P:positive regulation of gene expression"/>
    <property type="evidence" value="ECO:0000315"/>
    <property type="project" value="BHF-UCL"/>
</dbReference>
<dbReference type="GO" id="GO:1905033">
    <property type="term" value="P:positive regulation of membrane repolarization during cardiac muscle cell action potential"/>
    <property type="evidence" value="ECO:0000250"/>
    <property type="project" value="BHF-UCL"/>
</dbReference>
<dbReference type="GO" id="GO:1905026">
    <property type="term" value="P:positive regulation of membrane repolarization during ventricular cardiac muscle cell action potential"/>
    <property type="evidence" value="ECO:0000315"/>
    <property type="project" value="BHF-UCL"/>
</dbReference>
<dbReference type="GO" id="GO:0055117">
    <property type="term" value="P:regulation of cardiac muscle contraction"/>
    <property type="evidence" value="ECO:0000250"/>
    <property type="project" value="BHF-UCL"/>
</dbReference>
<dbReference type="GO" id="GO:1901207">
    <property type="term" value="P:regulation of heart looping"/>
    <property type="evidence" value="ECO:0000250"/>
    <property type="project" value="BHF-UCL"/>
</dbReference>
<dbReference type="CDD" id="cd19814">
    <property type="entry name" value="Bbox1_RNF207-like"/>
    <property type="match status" value="1"/>
</dbReference>
<dbReference type="CDD" id="cd16558">
    <property type="entry name" value="RING-HC_RNF207"/>
    <property type="match status" value="1"/>
</dbReference>
<dbReference type="FunFam" id="1.20.58.1540:FF:000002">
    <property type="entry name" value="Ring finger protein 207"/>
    <property type="match status" value="1"/>
</dbReference>
<dbReference type="FunFam" id="3.30.40.10:FF:000478">
    <property type="entry name" value="Ring finger protein 207"/>
    <property type="match status" value="1"/>
</dbReference>
<dbReference type="Gene3D" id="1.20.58.1540">
    <property type="entry name" value="Actin interacting protein 3, C-terminal domain"/>
    <property type="match status" value="1"/>
</dbReference>
<dbReference type="Gene3D" id="3.30.160.60">
    <property type="entry name" value="Classic Zinc Finger"/>
    <property type="match status" value="1"/>
</dbReference>
<dbReference type="Gene3D" id="3.30.40.10">
    <property type="entry name" value="Zinc/RING finger domain, C3HC4 (zinc finger)"/>
    <property type="match status" value="1"/>
</dbReference>
<dbReference type="InterPro" id="IPR021978">
    <property type="entry name" value="PML-like_CC"/>
</dbReference>
<dbReference type="InterPro" id="IPR039320">
    <property type="entry name" value="RNF207"/>
</dbReference>
<dbReference type="InterPro" id="IPR000315">
    <property type="entry name" value="Znf_B-box"/>
</dbReference>
<dbReference type="InterPro" id="IPR018957">
    <property type="entry name" value="Znf_C3HC4_RING-type"/>
</dbReference>
<dbReference type="InterPro" id="IPR001841">
    <property type="entry name" value="Znf_RING"/>
</dbReference>
<dbReference type="InterPro" id="IPR013083">
    <property type="entry name" value="Znf_RING/FYVE/PHD"/>
</dbReference>
<dbReference type="InterPro" id="IPR017907">
    <property type="entry name" value="Znf_RING_CS"/>
</dbReference>
<dbReference type="PANTHER" id="PTHR22635">
    <property type="entry name" value="RING FINGER PROTEIN 207"/>
    <property type="match status" value="1"/>
</dbReference>
<dbReference type="PANTHER" id="PTHR22635:SF0">
    <property type="entry name" value="RING FINGER PROTEIN 207"/>
    <property type="match status" value="1"/>
</dbReference>
<dbReference type="Pfam" id="PF12126">
    <property type="entry name" value="PML_CC"/>
    <property type="match status" value="1"/>
</dbReference>
<dbReference type="Pfam" id="PF00643">
    <property type="entry name" value="zf-B_box"/>
    <property type="match status" value="1"/>
</dbReference>
<dbReference type="Pfam" id="PF00097">
    <property type="entry name" value="zf-C3HC4"/>
    <property type="match status" value="1"/>
</dbReference>
<dbReference type="SMART" id="SM00184">
    <property type="entry name" value="RING"/>
    <property type="match status" value="1"/>
</dbReference>
<dbReference type="SUPFAM" id="SSF57850">
    <property type="entry name" value="RING/U-box"/>
    <property type="match status" value="1"/>
</dbReference>
<dbReference type="PROSITE" id="PS50119">
    <property type="entry name" value="ZF_BBOX"/>
    <property type="match status" value="1"/>
</dbReference>
<dbReference type="PROSITE" id="PS00518">
    <property type="entry name" value="ZF_RING_1"/>
    <property type="match status" value="1"/>
</dbReference>
<dbReference type="PROSITE" id="PS50089">
    <property type="entry name" value="ZF_RING_2"/>
    <property type="match status" value="1"/>
</dbReference>
<sequence>MSGAIFGPLEGPSSLDAPSIHPLVCPLCHVQYERPCLLDCFHDFCAGCLRGRATDGRLTCPLCQHQTVLKGPSGLPPVDRLLQFLVDSSGDGVEAVRCANCDLECSEQDVETTYFCNTCGQPLCARCRDETHRARMFARHDIVALGQRSRDVPQKCTLHAEPYLLFSTDKKLLLCIRCFRDMQKESRAHCVDLESAYVQGCERLEQAVLAVKALQTATREAIALLQAMVEEVRHSAAEEEDAIHALFGSMQDRLAERKALLLQAVQSQYEEKDKAFKEQLSHLATLLPTLQVHLVICSSFLSLANKAEFLDLGYELMERLQGIVTRPHHLRPIQSSKIASDHRAEFARCLEPLLLLGPRRVAAAASGANTLAGGLGPKALTGPHCPSPVGKMSGSPVQKPTLHRSISTKVLLAEGENTPFAEHCRHYEDSYRHLQAEMQSLKDQVQELHRDLTKHHSLIKAEIMGDVLHKSLQLDVQIASEHASLEGMRVVFQEIWEEAYQRVANEQEIYEAQLHDLLQLRQENAYLTTITKQITPYVRSIAKVKERLEPRFQAPVDEQSESLQNTHDDSRNNAASARNNPGSVPEKREKTSEPKGNSWAPNGLSEEPLLKNMDHHRSKQKNGGDVPTWREHPT</sequence>
<accession>Q6ZRF8</accession>
<accession>A2VCM8</accession>
<accession>B4DFR6</accession>
<accession>Q5TGS6</accession>
<accession>Q6ZS63</accession>
<accession>Q96MP2</accession>
<gene>
    <name type="primary">RNF207</name>
    <name type="synonym">C1orf188</name>
</gene>
<organism>
    <name type="scientific">Homo sapiens</name>
    <name type="common">Human</name>
    <dbReference type="NCBI Taxonomy" id="9606"/>
    <lineage>
        <taxon>Eukaryota</taxon>
        <taxon>Metazoa</taxon>
        <taxon>Chordata</taxon>
        <taxon>Craniata</taxon>
        <taxon>Vertebrata</taxon>
        <taxon>Euteleostomi</taxon>
        <taxon>Mammalia</taxon>
        <taxon>Eutheria</taxon>
        <taxon>Euarchontoglires</taxon>
        <taxon>Primates</taxon>
        <taxon>Haplorrhini</taxon>
        <taxon>Catarrhini</taxon>
        <taxon>Hominidae</taxon>
        <taxon>Homo</taxon>
    </lineage>
</organism>
<proteinExistence type="evidence at protein level"/>
<protein>
    <recommendedName>
        <fullName>RING finger protein 207</fullName>
    </recommendedName>
</protein>
<keyword id="KW-0025">Alternative splicing</keyword>
<keyword id="KW-0175">Coiled coil</keyword>
<keyword id="KW-0963">Cytoplasm</keyword>
<keyword id="KW-0479">Metal-binding</keyword>
<keyword id="KW-1267">Proteomics identification</keyword>
<keyword id="KW-1185">Reference proteome</keyword>
<keyword id="KW-0862">Zinc</keyword>
<keyword id="KW-0863">Zinc-finger</keyword>